<organism>
    <name type="scientific">Rhodopseudomonas palustris (strain BisA53)</name>
    <dbReference type="NCBI Taxonomy" id="316055"/>
    <lineage>
        <taxon>Bacteria</taxon>
        <taxon>Pseudomonadati</taxon>
        <taxon>Pseudomonadota</taxon>
        <taxon>Alphaproteobacteria</taxon>
        <taxon>Hyphomicrobiales</taxon>
        <taxon>Nitrobacteraceae</taxon>
        <taxon>Rhodopseudomonas</taxon>
    </lineage>
</organism>
<keyword id="KW-0687">Ribonucleoprotein</keyword>
<keyword id="KW-0689">Ribosomal protein</keyword>
<keyword id="KW-0694">RNA-binding</keyword>
<keyword id="KW-0699">rRNA-binding</keyword>
<dbReference type="EMBL" id="CP000463">
    <property type="protein sequence ID" value="ABJ04515.1"/>
    <property type="molecule type" value="Genomic_DNA"/>
</dbReference>
<dbReference type="SMR" id="Q07U69"/>
<dbReference type="STRING" id="316055.RPE_0556"/>
<dbReference type="KEGG" id="rpe:RPE_0556"/>
<dbReference type="eggNOG" id="COG0261">
    <property type="taxonomic scope" value="Bacteria"/>
</dbReference>
<dbReference type="HOGENOM" id="CLU_061463_1_2_5"/>
<dbReference type="OrthoDB" id="9813334at2"/>
<dbReference type="GO" id="GO:0005737">
    <property type="term" value="C:cytoplasm"/>
    <property type="evidence" value="ECO:0007669"/>
    <property type="project" value="UniProtKB-ARBA"/>
</dbReference>
<dbReference type="GO" id="GO:1990904">
    <property type="term" value="C:ribonucleoprotein complex"/>
    <property type="evidence" value="ECO:0007669"/>
    <property type="project" value="UniProtKB-KW"/>
</dbReference>
<dbReference type="GO" id="GO:0005840">
    <property type="term" value="C:ribosome"/>
    <property type="evidence" value="ECO:0007669"/>
    <property type="project" value="UniProtKB-KW"/>
</dbReference>
<dbReference type="GO" id="GO:0019843">
    <property type="term" value="F:rRNA binding"/>
    <property type="evidence" value="ECO:0007669"/>
    <property type="project" value="UniProtKB-UniRule"/>
</dbReference>
<dbReference type="GO" id="GO:0003735">
    <property type="term" value="F:structural constituent of ribosome"/>
    <property type="evidence" value="ECO:0007669"/>
    <property type="project" value="InterPro"/>
</dbReference>
<dbReference type="GO" id="GO:0006412">
    <property type="term" value="P:translation"/>
    <property type="evidence" value="ECO:0007669"/>
    <property type="project" value="UniProtKB-UniRule"/>
</dbReference>
<dbReference type="HAMAP" id="MF_01363">
    <property type="entry name" value="Ribosomal_bL21"/>
    <property type="match status" value="1"/>
</dbReference>
<dbReference type="InterPro" id="IPR028909">
    <property type="entry name" value="bL21-like"/>
</dbReference>
<dbReference type="InterPro" id="IPR036164">
    <property type="entry name" value="bL21-like_sf"/>
</dbReference>
<dbReference type="InterPro" id="IPR001787">
    <property type="entry name" value="Ribosomal_bL21"/>
</dbReference>
<dbReference type="NCBIfam" id="TIGR00061">
    <property type="entry name" value="L21"/>
    <property type="match status" value="1"/>
</dbReference>
<dbReference type="PANTHER" id="PTHR21349">
    <property type="entry name" value="50S RIBOSOMAL PROTEIN L21"/>
    <property type="match status" value="1"/>
</dbReference>
<dbReference type="PANTHER" id="PTHR21349:SF0">
    <property type="entry name" value="LARGE RIBOSOMAL SUBUNIT PROTEIN BL21M"/>
    <property type="match status" value="1"/>
</dbReference>
<dbReference type="Pfam" id="PF00829">
    <property type="entry name" value="Ribosomal_L21p"/>
    <property type="match status" value="1"/>
</dbReference>
<dbReference type="SUPFAM" id="SSF141091">
    <property type="entry name" value="L21p-like"/>
    <property type="match status" value="1"/>
</dbReference>
<accession>Q07U69</accession>
<sequence length="124" mass="13266">MFAVIKTGGRQYRVVPDDVLEIGKIAGDVGTIVQLGEVLVLGADTPVLGVPTVAGASVAAEVLDHKRGPKVISFKKRRRKNSKRKRGYRDEITVLRITEILADGNAPSIGPRVRKAKPAAEAAE</sequence>
<comment type="function">
    <text evidence="1">This protein binds to 23S rRNA in the presence of protein L20.</text>
</comment>
<comment type="subunit">
    <text evidence="1">Part of the 50S ribosomal subunit. Contacts protein L20.</text>
</comment>
<comment type="similarity">
    <text evidence="1">Belongs to the bacterial ribosomal protein bL21 family.</text>
</comment>
<protein>
    <recommendedName>
        <fullName evidence="1">Large ribosomal subunit protein bL21</fullName>
    </recommendedName>
    <alternativeName>
        <fullName evidence="3">50S ribosomal protein L21</fullName>
    </alternativeName>
</protein>
<feature type="chain" id="PRO_1000067883" description="Large ribosomal subunit protein bL21">
    <location>
        <begin position="1"/>
        <end position="124"/>
    </location>
</feature>
<feature type="region of interest" description="Disordered" evidence="2">
    <location>
        <begin position="105"/>
        <end position="124"/>
    </location>
</feature>
<proteinExistence type="inferred from homology"/>
<name>RL21_RHOP5</name>
<reference key="1">
    <citation type="submission" date="2006-09" db="EMBL/GenBank/DDBJ databases">
        <title>Complete sequence of Rhodopseudomonas palustris BisA53.</title>
        <authorList>
            <consortium name="US DOE Joint Genome Institute"/>
            <person name="Copeland A."/>
            <person name="Lucas S."/>
            <person name="Lapidus A."/>
            <person name="Barry K."/>
            <person name="Detter J.C."/>
            <person name="Glavina del Rio T."/>
            <person name="Hammon N."/>
            <person name="Israni S."/>
            <person name="Dalin E."/>
            <person name="Tice H."/>
            <person name="Pitluck S."/>
            <person name="Chain P."/>
            <person name="Malfatti S."/>
            <person name="Shin M."/>
            <person name="Vergez L."/>
            <person name="Schmutz J."/>
            <person name="Larimer F."/>
            <person name="Land M."/>
            <person name="Hauser L."/>
            <person name="Pelletier D.A."/>
            <person name="Kyrpides N."/>
            <person name="Kim E."/>
            <person name="Harwood C.S."/>
            <person name="Oda Y."/>
            <person name="Richardson P."/>
        </authorList>
    </citation>
    <scope>NUCLEOTIDE SEQUENCE [LARGE SCALE GENOMIC DNA]</scope>
    <source>
        <strain>BisA53</strain>
    </source>
</reference>
<gene>
    <name evidence="1" type="primary">rplU</name>
    <name type="ordered locus">RPE_0556</name>
</gene>
<evidence type="ECO:0000255" key="1">
    <source>
        <dbReference type="HAMAP-Rule" id="MF_01363"/>
    </source>
</evidence>
<evidence type="ECO:0000256" key="2">
    <source>
        <dbReference type="SAM" id="MobiDB-lite"/>
    </source>
</evidence>
<evidence type="ECO:0000305" key="3"/>